<organism>
    <name type="scientific">Bacillus anthracis</name>
    <dbReference type="NCBI Taxonomy" id="1392"/>
    <lineage>
        <taxon>Bacteria</taxon>
        <taxon>Bacillati</taxon>
        <taxon>Bacillota</taxon>
        <taxon>Bacilli</taxon>
        <taxon>Bacillales</taxon>
        <taxon>Bacillaceae</taxon>
        <taxon>Bacillus</taxon>
        <taxon>Bacillus cereus group</taxon>
    </lineage>
</organism>
<feature type="chain" id="PRO_0000201144" description="Arginine decarboxylase">
    <location>
        <begin position="1"/>
        <end position="493"/>
    </location>
</feature>
<feature type="modified residue" description="N6-(pyridoxal phosphate)lysine" evidence="1">
    <location>
        <position position="229"/>
    </location>
</feature>
<proteinExistence type="inferred from homology"/>
<dbReference type="EC" id="4.1.1.19"/>
<dbReference type="EMBL" id="AE016879">
    <property type="protein sequence ID" value="AAP27896.1"/>
    <property type="molecule type" value="Genomic_DNA"/>
</dbReference>
<dbReference type="EMBL" id="AE017334">
    <property type="protein sequence ID" value="AAT33294.1"/>
    <property type="molecule type" value="Genomic_DNA"/>
</dbReference>
<dbReference type="EMBL" id="AE017225">
    <property type="protein sequence ID" value="AAT56175.1"/>
    <property type="molecule type" value="Genomic_DNA"/>
</dbReference>
<dbReference type="RefSeq" id="NP_846410.1">
    <property type="nucleotide sequence ID" value="NC_003997.3"/>
</dbReference>
<dbReference type="RefSeq" id="YP_030124.1">
    <property type="nucleotide sequence ID" value="NC_005945.1"/>
</dbReference>
<dbReference type="SMR" id="Q81MS2"/>
<dbReference type="IntAct" id="Q81MS2">
    <property type="interactions" value="5"/>
</dbReference>
<dbReference type="STRING" id="261594.GBAA_4172"/>
<dbReference type="DNASU" id="1089028"/>
<dbReference type="KEGG" id="ban:BA_4172"/>
<dbReference type="KEGG" id="bar:GBAA_4172"/>
<dbReference type="KEGG" id="bat:BAS3874"/>
<dbReference type="PATRIC" id="fig|198094.11.peg.4143"/>
<dbReference type="eggNOG" id="COG1982">
    <property type="taxonomic scope" value="Bacteria"/>
</dbReference>
<dbReference type="HOGENOM" id="CLU_025925_2_1_9"/>
<dbReference type="OMA" id="MMEAPGG"/>
<dbReference type="OrthoDB" id="9815233at2"/>
<dbReference type="UniPathway" id="UPA00186">
    <property type="reaction ID" value="UER00284"/>
</dbReference>
<dbReference type="Proteomes" id="UP000000427">
    <property type="component" value="Chromosome"/>
</dbReference>
<dbReference type="Proteomes" id="UP000000594">
    <property type="component" value="Chromosome"/>
</dbReference>
<dbReference type="GO" id="GO:0005737">
    <property type="term" value="C:cytoplasm"/>
    <property type="evidence" value="ECO:0007669"/>
    <property type="project" value="UniProtKB-SubCell"/>
</dbReference>
<dbReference type="GO" id="GO:0008792">
    <property type="term" value="F:arginine decarboxylase activity"/>
    <property type="evidence" value="ECO:0007669"/>
    <property type="project" value="UniProtKB-EC"/>
</dbReference>
<dbReference type="GO" id="GO:0009446">
    <property type="term" value="P:putrescine biosynthetic process"/>
    <property type="evidence" value="ECO:0007669"/>
    <property type="project" value="UniProtKB-KW"/>
</dbReference>
<dbReference type="GO" id="GO:0008295">
    <property type="term" value="P:spermidine biosynthetic process"/>
    <property type="evidence" value="ECO:0007669"/>
    <property type="project" value="UniProtKB-KW"/>
</dbReference>
<dbReference type="CDD" id="cd00615">
    <property type="entry name" value="Orn_deC_like"/>
    <property type="match status" value="1"/>
</dbReference>
<dbReference type="FunFam" id="3.40.640.10:FF:000148">
    <property type="entry name" value="Arginine decarboxylase"/>
    <property type="match status" value="1"/>
</dbReference>
<dbReference type="Gene3D" id="3.90.1150.10">
    <property type="entry name" value="Aspartate Aminotransferase, domain 1"/>
    <property type="match status" value="1"/>
</dbReference>
<dbReference type="Gene3D" id="3.90.105.10">
    <property type="entry name" value="Molybdopterin biosynthesis moea protein, domain 2"/>
    <property type="match status" value="1"/>
</dbReference>
<dbReference type="Gene3D" id="3.40.640.10">
    <property type="entry name" value="Type I PLP-dependent aspartate aminotransferase-like (Major domain)"/>
    <property type="match status" value="1"/>
</dbReference>
<dbReference type="InterPro" id="IPR000310">
    <property type="entry name" value="Orn/Lys/Arg_deCO2ase_major_dom"/>
</dbReference>
<dbReference type="InterPro" id="IPR052357">
    <property type="entry name" value="Orn_Lys_Arg_decarboxylase-I"/>
</dbReference>
<dbReference type="InterPro" id="IPR008286">
    <property type="entry name" value="Prn/Lys/Arg_de-COase_C"/>
</dbReference>
<dbReference type="InterPro" id="IPR036633">
    <property type="entry name" value="Prn/Lys/Arg_de-COase_C_sf"/>
</dbReference>
<dbReference type="InterPro" id="IPR015424">
    <property type="entry name" value="PyrdxlP-dep_Trfase"/>
</dbReference>
<dbReference type="InterPro" id="IPR015421">
    <property type="entry name" value="PyrdxlP-dep_Trfase_major"/>
</dbReference>
<dbReference type="InterPro" id="IPR015422">
    <property type="entry name" value="PyrdxlP-dep_Trfase_small"/>
</dbReference>
<dbReference type="PANTHER" id="PTHR43277">
    <property type="entry name" value="ARGININE DECARBOXYLASE"/>
    <property type="match status" value="1"/>
</dbReference>
<dbReference type="PANTHER" id="PTHR43277:SF4">
    <property type="entry name" value="ARGININE DECARBOXYLASE"/>
    <property type="match status" value="1"/>
</dbReference>
<dbReference type="Pfam" id="PF01276">
    <property type="entry name" value="OKR_DC_1"/>
    <property type="match status" value="1"/>
</dbReference>
<dbReference type="Pfam" id="PF03711">
    <property type="entry name" value="OKR_DC_1_C"/>
    <property type="match status" value="1"/>
</dbReference>
<dbReference type="SUPFAM" id="SSF55904">
    <property type="entry name" value="Ornithine decarboxylase C-terminal domain"/>
    <property type="match status" value="1"/>
</dbReference>
<dbReference type="SUPFAM" id="SSF53383">
    <property type="entry name" value="PLP-dependent transferases"/>
    <property type="match status" value="1"/>
</dbReference>
<dbReference type="PROSITE" id="PS00703">
    <property type="entry name" value="OKR_DC_1"/>
    <property type="match status" value="1"/>
</dbReference>
<evidence type="ECO:0000250" key="1"/>
<evidence type="ECO:0000305" key="2"/>
<gene>
    <name type="primary">speA</name>
    <name type="ordered locus">BA_4172</name>
    <name type="ordered locus">GBAA_4172</name>
    <name type="ordered locus">BAS3874</name>
</gene>
<sequence length="493" mass="54215">MYRLSQYETPLFTALVEHSKRNPIQFHIPGHKKGQGMDPEFREFIGHNALAIDLINIAPLDDLHHPKGMIKEAQDLAAAAFGADHTFFSIQGTSGAIMTMVMSVCGPGDKILVPRNVHKSVMSAIIFSGAKPIFMHPEIDPKLGISHGITIQSVKKALEEHSDAKGLLVINPTYFGFAADLEQIVQLAHSYDIPVLVDEAHGVHIHFHDELPMSAMQAGADMAATSVHKLGGSLTQSSILNVKEGLVNVKHVQSIISMLTTTSTSYILLASLDVARKRLATEGKALIEQTIQLAEQVRNAINDIEHLYCPGKEMLGTDATFNYDPTKIIVSVKDLGITGHQAEVWLREQYNIEVELSDLYNILCLVTFGDTESETNTLIAALQDLSAIFKNKADKGVRIQVEIPEIPVLALSPRDAFYSETEVIPFENAAGRIIADFVMVYPPGIPIFTPGEIITQDNLEYIRKNLEAGLPVQGPEDMTLQTLRVIKEYKPIS</sequence>
<name>SPEA_BACAN</name>
<comment type="function">
    <text evidence="1">Catalyzes the formation of agmatine from arginine.</text>
</comment>
<comment type="catalytic activity">
    <reaction>
        <text>L-arginine + H(+) = agmatine + CO2</text>
        <dbReference type="Rhea" id="RHEA:17641"/>
        <dbReference type="ChEBI" id="CHEBI:15378"/>
        <dbReference type="ChEBI" id="CHEBI:16526"/>
        <dbReference type="ChEBI" id="CHEBI:32682"/>
        <dbReference type="ChEBI" id="CHEBI:58145"/>
        <dbReference type="EC" id="4.1.1.19"/>
    </reaction>
</comment>
<comment type="cofactor">
    <cofactor evidence="1">
        <name>pyridoxal 5'-phosphate</name>
        <dbReference type="ChEBI" id="CHEBI:597326"/>
    </cofactor>
</comment>
<comment type="pathway">
    <text>Amine and polyamine biosynthesis; agmatine biosynthesis; agmatine from L-arginine: step 1/1.</text>
</comment>
<comment type="subcellular location">
    <subcellularLocation>
        <location evidence="2">Cytoplasm</location>
    </subcellularLocation>
</comment>
<comment type="similarity">
    <text evidence="2">Belongs to the Orn/Lys/Arg decarboxylase class-I family.</text>
</comment>
<protein>
    <recommendedName>
        <fullName>Arginine decarboxylase</fullName>
        <ecNumber>4.1.1.19</ecNumber>
    </recommendedName>
</protein>
<keyword id="KW-0963">Cytoplasm</keyword>
<keyword id="KW-0210">Decarboxylase</keyword>
<keyword id="KW-0456">Lyase</keyword>
<keyword id="KW-0620">Polyamine biosynthesis</keyword>
<keyword id="KW-0661">Putrescine biosynthesis</keyword>
<keyword id="KW-0663">Pyridoxal phosphate</keyword>
<keyword id="KW-1185">Reference proteome</keyword>
<keyword id="KW-0745">Spermidine biosynthesis</keyword>
<reference key="1">
    <citation type="journal article" date="2003" name="Nature">
        <title>The genome sequence of Bacillus anthracis Ames and comparison to closely related bacteria.</title>
        <authorList>
            <person name="Read T.D."/>
            <person name="Peterson S.N."/>
            <person name="Tourasse N.J."/>
            <person name="Baillie L.W."/>
            <person name="Paulsen I.T."/>
            <person name="Nelson K.E."/>
            <person name="Tettelin H."/>
            <person name="Fouts D.E."/>
            <person name="Eisen J.A."/>
            <person name="Gill S.R."/>
            <person name="Holtzapple E.K."/>
            <person name="Okstad O.A."/>
            <person name="Helgason E."/>
            <person name="Rilstone J."/>
            <person name="Wu M."/>
            <person name="Kolonay J.F."/>
            <person name="Beanan M.J."/>
            <person name="Dodson R.J."/>
            <person name="Brinkac L.M."/>
            <person name="Gwinn M.L."/>
            <person name="DeBoy R.T."/>
            <person name="Madpu R."/>
            <person name="Daugherty S.C."/>
            <person name="Durkin A.S."/>
            <person name="Haft D.H."/>
            <person name="Nelson W.C."/>
            <person name="Peterson J.D."/>
            <person name="Pop M."/>
            <person name="Khouri H.M."/>
            <person name="Radune D."/>
            <person name="Benton J.L."/>
            <person name="Mahamoud Y."/>
            <person name="Jiang L."/>
            <person name="Hance I.R."/>
            <person name="Weidman J.F."/>
            <person name="Berry K.J."/>
            <person name="Plaut R.D."/>
            <person name="Wolf A.M."/>
            <person name="Watkins K.L."/>
            <person name="Nierman W.C."/>
            <person name="Hazen A."/>
            <person name="Cline R.T."/>
            <person name="Redmond C."/>
            <person name="Thwaite J.E."/>
            <person name="White O."/>
            <person name="Salzberg S.L."/>
            <person name="Thomason B."/>
            <person name="Friedlander A.M."/>
            <person name="Koehler T.M."/>
            <person name="Hanna P.C."/>
            <person name="Kolstoe A.-B."/>
            <person name="Fraser C.M."/>
        </authorList>
    </citation>
    <scope>NUCLEOTIDE SEQUENCE [LARGE SCALE GENOMIC DNA]</scope>
    <source>
        <strain>Ames / isolate Porton</strain>
    </source>
</reference>
<reference key="2">
    <citation type="journal article" date="2009" name="J. Bacteriol.">
        <title>The complete genome sequence of Bacillus anthracis Ames 'Ancestor'.</title>
        <authorList>
            <person name="Ravel J."/>
            <person name="Jiang L."/>
            <person name="Stanley S.T."/>
            <person name="Wilson M.R."/>
            <person name="Decker R.S."/>
            <person name="Read T.D."/>
            <person name="Worsham P."/>
            <person name="Keim P.S."/>
            <person name="Salzberg S.L."/>
            <person name="Fraser-Liggett C.M."/>
            <person name="Rasko D.A."/>
        </authorList>
    </citation>
    <scope>NUCLEOTIDE SEQUENCE [LARGE SCALE GENOMIC DNA]</scope>
    <source>
        <strain>Ames ancestor</strain>
    </source>
</reference>
<reference key="3">
    <citation type="submission" date="2004-01" db="EMBL/GenBank/DDBJ databases">
        <title>Complete genome sequence of Bacillus anthracis Sterne.</title>
        <authorList>
            <person name="Brettin T.S."/>
            <person name="Bruce D."/>
            <person name="Challacombe J.F."/>
            <person name="Gilna P."/>
            <person name="Han C."/>
            <person name="Hill K."/>
            <person name="Hitchcock P."/>
            <person name="Jackson P."/>
            <person name="Keim P."/>
            <person name="Longmire J."/>
            <person name="Lucas S."/>
            <person name="Okinaka R."/>
            <person name="Richardson P."/>
            <person name="Rubin E."/>
            <person name="Tice H."/>
        </authorList>
    </citation>
    <scope>NUCLEOTIDE SEQUENCE [LARGE SCALE GENOMIC DNA]</scope>
    <source>
        <strain>Sterne</strain>
    </source>
</reference>
<accession>Q81MS2</accession>
<accession>Q6HU64</accession>
<accession>Q6KNE9</accession>